<accession>Q9ZCR1</accession>
<reference key="1">
    <citation type="journal article" date="1998" name="Nature">
        <title>The genome sequence of Rickettsia prowazekii and the origin of mitochondria.</title>
        <authorList>
            <person name="Andersson S.G.E."/>
            <person name="Zomorodipour A."/>
            <person name="Andersson J.O."/>
            <person name="Sicheritz-Ponten T."/>
            <person name="Alsmark U.C.M."/>
            <person name="Podowski R.M."/>
            <person name="Naeslund A.K."/>
            <person name="Eriksson A.-S."/>
            <person name="Winkler H.H."/>
            <person name="Kurland C.G."/>
        </authorList>
    </citation>
    <scope>NUCLEOTIDE SEQUENCE [LARGE SCALE GENOMIC DNA]</scope>
    <source>
        <strain>Madrid E</strain>
    </source>
</reference>
<protein>
    <recommendedName>
        <fullName evidence="1">Small ribosomal subunit protein uS3</fullName>
    </recommendedName>
    <alternativeName>
        <fullName evidence="2">30S ribosomal protein S3</fullName>
    </alternativeName>
</protein>
<organism>
    <name type="scientific">Rickettsia prowazekii (strain Madrid E)</name>
    <dbReference type="NCBI Taxonomy" id="272947"/>
    <lineage>
        <taxon>Bacteria</taxon>
        <taxon>Pseudomonadati</taxon>
        <taxon>Pseudomonadota</taxon>
        <taxon>Alphaproteobacteria</taxon>
        <taxon>Rickettsiales</taxon>
        <taxon>Rickettsiaceae</taxon>
        <taxon>Rickettsieae</taxon>
        <taxon>Rickettsia</taxon>
        <taxon>typhus group</taxon>
    </lineage>
</organism>
<proteinExistence type="inferred from homology"/>
<comment type="function">
    <text evidence="1">Binds the lower part of the 30S subunit head. Binds mRNA in the 70S ribosome, positioning it for translation.</text>
</comment>
<comment type="subunit">
    <text evidence="1">Part of the 30S ribosomal subunit. Forms a tight complex with proteins S10 and S14.</text>
</comment>
<comment type="similarity">
    <text evidence="1">Belongs to the universal ribosomal protein uS3 family.</text>
</comment>
<evidence type="ECO:0000255" key="1">
    <source>
        <dbReference type="HAMAP-Rule" id="MF_01309"/>
    </source>
</evidence>
<evidence type="ECO:0000305" key="2"/>
<dbReference type="EMBL" id="AJ235272">
    <property type="protein sequence ID" value="CAA15093.1"/>
    <property type="molecule type" value="Genomic_DNA"/>
</dbReference>
<dbReference type="PIR" id="C71671">
    <property type="entry name" value="C71671"/>
</dbReference>
<dbReference type="RefSeq" id="NP_221017.1">
    <property type="nucleotide sequence ID" value="NC_000963.1"/>
</dbReference>
<dbReference type="RefSeq" id="WP_004596205.1">
    <property type="nucleotide sequence ID" value="NC_000963.1"/>
</dbReference>
<dbReference type="SMR" id="Q9ZCR1"/>
<dbReference type="STRING" id="272947.gene:17555730"/>
<dbReference type="EnsemblBacteria" id="CAA15093">
    <property type="protein sequence ID" value="CAA15093"/>
    <property type="gene ID" value="CAA15093"/>
</dbReference>
<dbReference type="GeneID" id="57569778"/>
<dbReference type="KEGG" id="rpr:RP653"/>
<dbReference type="PATRIC" id="fig|272947.5.peg.675"/>
<dbReference type="eggNOG" id="COG0092">
    <property type="taxonomic scope" value="Bacteria"/>
</dbReference>
<dbReference type="HOGENOM" id="CLU_058591_0_2_5"/>
<dbReference type="OrthoDB" id="9806396at2"/>
<dbReference type="Proteomes" id="UP000002480">
    <property type="component" value="Chromosome"/>
</dbReference>
<dbReference type="GO" id="GO:0022627">
    <property type="term" value="C:cytosolic small ribosomal subunit"/>
    <property type="evidence" value="ECO:0007669"/>
    <property type="project" value="TreeGrafter"/>
</dbReference>
<dbReference type="GO" id="GO:0003729">
    <property type="term" value="F:mRNA binding"/>
    <property type="evidence" value="ECO:0007669"/>
    <property type="project" value="UniProtKB-UniRule"/>
</dbReference>
<dbReference type="GO" id="GO:0019843">
    <property type="term" value="F:rRNA binding"/>
    <property type="evidence" value="ECO:0007669"/>
    <property type="project" value="UniProtKB-UniRule"/>
</dbReference>
<dbReference type="GO" id="GO:0003735">
    <property type="term" value="F:structural constituent of ribosome"/>
    <property type="evidence" value="ECO:0007669"/>
    <property type="project" value="InterPro"/>
</dbReference>
<dbReference type="GO" id="GO:0006412">
    <property type="term" value="P:translation"/>
    <property type="evidence" value="ECO:0007669"/>
    <property type="project" value="UniProtKB-UniRule"/>
</dbReference>
<dbReference type="CDD" id="cd02412">
    <property type="entry name" value="KH-II_30S_S3"/>
    <property type="match status" value="1"/>
</dbReference>
<dbReference type="FunFam" id="3.30.300.20:FF:000001">
    <property type="entry name" value="30S ribosomal protein S3"/>
    <property type="match status" value="1"/>
</dbReference>
<dbReference type="Gene3D" id="3.30.300.20">
    <property type="match status" value="1"/>
</dbReference>
<dbReference type="Gene3D" id="3.30.1140.32">
    <property type="entry name" value="Ribosomal protein S3, C-terminal domain"/>
    <property type="match status" value="1"/>
</dbReference>
<dbReference type="HAMAP" id="MF_01309_B">
    <property type="entry name" value="Ribosomal_uS3_B"/>
    <property type="match status" value="1"/>
</dbReference>
<dbReference type="InterPro" id="IPR004087">
    <property type="entry name" value="KH_dom"/>
</dbReference>
<dbReference type="InterPro" id="IPR015946">
    <property type="entry name" value="KH_dom-like_a/b"/>
</dbReference>
<dbReference type="InterPro" id="IPR004044">
    <property type="entry name" value="KH_dom_type_2"/>
</dbReference>
<dbReference type="InterPro" id="IPR009019">
    <property type="entry name" value="KH_sf_prok-type"/>
</dbReference>
<dbReference type="InterPro" id="IPR036419">
    <property type="entry name" value="Ribosomal_S3_C_sf"/>
</dbReference>
<dbReference type="InterPro" id="IPR005704">
    <property type="entry name" value="Ribosomal_uS3_bac-typ"/>
</dbReference>
<dbReference type="InterPro" id="IPR001351">
    <property type="entry name" value="Ribosomal_uS3_C"/>
</dbReference>
<dbReference type="InterPro" id="IPR018280">
    <property type="entry name" value="Ribosomal_uS3_CS"/>
</dbReference>
<dbReference type="NCBIfam" id="TIGR01009">
    <property type="entry name" value="rpsC_bact"/>
    <property type="match status" value="1"/>
</dbReference>
<dbReference type="PANTHER" id="PTHR11760">
    <property type="entry name" value="30S/40S RIBOSOMAL PROTEIN S3"/>
    <property type="match status" value="1"/>
</dbReference>
<dbReference type="PANTHER" id="PTHR11760:SF19">
    <property type="entry name" value="SMALL RIBOSOMAL SUBUNIT PROTEIN US3C"/>
    <property type="match status" value="1"/>
</dbReference>
<dbReference type="Pfam" id="PF07650">
    <property type="entry name" value="KH_2"/>
    <property type="match status" value="1"/>
</dbReference>
<dbReference type="Pfam" id="PF00189">
    <property type="entry name" value="Ribosomal_S3_C"/>
    <property type="match status" value="1"/>
</dbReference>
<dbReference type="SMART" id="SM00322">
    <property type="entry name" value="KH"/>
    <property type="match status" value="1"/>
</dbReference>
<dbReference type="SUPFAM" id="SSF54814">
    <property type="entry name" value="Prokaryotic type KH domain (KH-domain type II)"/>
    <property type="match status" value="1"/>
</dbReference>
<dbReference type="SUPFAM" id="SSF54821">
    <property type="entry name" value="Ribosomal protein S3 C-terminal domain"/>
    <property type="match status" value="1"/>
</dbReference>
<dbReference type="PROSITE" id="PS50823">
    <property type="entry name" value="KH_TYPE_2"/>
    <property type="match status" value="1"/>
</dbReference>
<dbReference type="PROSITE" id="PS00548">
    <property type="entry name" value="RIBOSOMAL_S3"/>
    <property type="match status" value="1"/>
</dbReference>
<keyword id="KW-1185">Reference proteome</keyword>
<keyword id="KW-0687">Ribonucleoprotein</keyword>
<keyword id="KW-0689">Ribosomal protein</keyword>
<keyword id="KW-0694">RNA-binding</keyword>
<keyword id="KW-0699">rRNA-binding</keyword>
<feature type="chain" id="PRO_0000130187" description="Small ribosomal subunit protein uS3">
    <location>
        <begin position="1"/>
        <end position="217"/>
    </location>
</feature>
<feature type="domain" description="KH type-2" evidence="1">
    <location>
        <begin position="40"/>
        <end position="110"/>
    </location>
</feature>
<name>RS3_RICPR</name>
<gene>
    <name evidence="1" type="primary">rpsC</name>
    <name type="ordered locus">RP653</name>
</gene>
<sequence length="217" mass="24791">MGQKVCAHGFRVGPTLIKDWDSILYAEKHYKTLFIQDLKIRDLINKWFNQAQISRVLIERPSNKSIIININAKKPNIIIGKNGTEIDKLKKAIENMTFLKEVYINIHEVRKFNIDAAIVAQTIAAQLEKRVSFRKAMKTAIQASFKQGGQGIRVSCSGRLGGAEIARTEWYIEGRMPLHTLRADIDYSTAEAITTYGVIGVKVWIYKGEYKENKRYN</sequence>